<evidence type="ECO:0000255" key="1">
    <source>
        <dbReference type="HAMAP-Rule" id="MF_01342"/>
    </source>
</evidence>
<evidence type="ECO:0000305" key="2"/>
<gene>
    <name evidence="1" type="primary">rplP</name>
    <name type="ordered locus">DVU_1310</name>
</gene>
<proteinExistence type="inferred from homology"/>
<organism>
    <name type="scientific">Nitratidesulfovibrio vulgaris (strain ATCC 29579 / DSM 644 / CCUG 34227 / NCIMB 8303 / VKM B-1760 / Hildenborough)</name>
    <name type="common">Desulfovibrio vulgaris</name>
    <dbReference type="NCBI Taxonomy" id="882"/>
    <lineage>
        <taxon>Bacteria</taxon>
        <taxon>Pseudomonadati</taxon>
        <taxon>Thermodesulfobacteriota</taxon>
        <taxon>Desulfovibrionia</taxon>
        <taxon>Desulfovibrionales</taxon>
        <taxon>Desulfovibrionaceae</taxon>
        <taxon>Nitratidesulfovibrio</taxon>
    </lineage>
</organism>
<comment type="function">
    <text evidence="1">Binds 23S rRNA and is also seen to make contacts with the A and possibly P site tRNAs.</text>
</comment>
<comment type="subunit">
    <text evidence="1">Part of the 50S ribosomal subunit.</text>
</comment>
<comment type="similarity">
    <text evidence="1">Belongs to the universal ribosomal protein uL16 family.</text>
</comment>
<accession>Q72CH3</accession>
<sequence length="137" mass="15056">MLSPRKVKFRKWQKGRNKGVATRGATVAFGDIGLKAIEHGKLTSQQIEAARIAMMRHIKRGGKVWIRIFPDRPVTAKPLETRQGSGKGSPVGWCAPVKPGRVLYEIKGVSLELAKEALTRAAHKLPVKTVIVVREGV</sequence>
<keyword id="KW-1185">Reference proteome</keyword>
<keyword id="KW-0687">Ribonucleoprotein</keyword>
<keyword id="KW-0689">Ribosomal protein</keyword>
<keyword id="KW-0694">RNA-binding</keyword>
<keyword id="KW-0699">rRNA-binding</keyword>
<keyword id="KW-0820">tRNA-binding</keyword>
<dbReference type="EMBL" id="AE017285">
    <property type="protein sequence ID" value="AAS95788.1"/>
    <property type="molecule type" value="Genomic_DNA"/>
</dbReference>
<dbReference type="RefSeq" id="WP_010938605.1">
    <property type="nucleotide sequence ID" value="NC_002937.3"/>
</dbReference>
<dbReference type="RefSeq" id="YP_010529.1">
    <property type="nucleotide sequence ID" value="NC_002937.3"/>
</dbReference>
<dbReference type="SMR" id="Q72CH3"/>
<dbReference type="STRING" id="882.DVU_1310"/>
<dbReference type="PaxDb" id="882-DVU_1310"/>
<dbReference type="EnsemblBacteria" id="AAS95788">
    <property type="protein sequence ID" value="AAS95788"/>
    <property type="gene ID" value="DVU_1310"/>
</dbReference>
<dbReference type="KEGG" id="dvu:DVU_1310"/>
<dbReference type="PATRIC" id="fig|882.5.peg.1222"/>
<dbReference type="eggNOG" id="COG0197">
    <property type="taxonomic scope" value="Bacteria"/>
</dbReference>
<dbReference type="HOGENOM" id="CLU_078858_2_1_7"/>
<dbReference type="OrthoDB" id="9802589at2"/>
<dbReference type="PhylomeDB" id="Q72CH3"/>
<dbReference type="Proteomes" id="UP000002194">
    <property type="component" value="Chromosome"/>
</dbReference>
<dbReference type="GO" id="GO:0022625">
    <property type="term" value="C:cytosolic large ribosomal subunit"/>
    <property type="evidence" value="ECO:0007669"/>
    <property type="project" value="TreeGrafter"/>
</dbReference>
<dbReference type="GO" id="GO:0019843">
    <property type="term" value="F:rRNA binding"/>
    <property type="evidence" value="ECO:0007669"/>
    <property type="project" value="UniProtKB-UniRule"/>
</dbReference>
<dbReference type="GO" id="GO:0003735">
    <property type="term" value="F:structural constituent of ribosome"/>
    <property type="evidence" value="ECO:0007669"/>
    <property type="project" value="InterPro"/>
</dbReference>
<dbReference type="GO" id="GO:0000049">
    <property type="term" value="F:tRNA binding"/>
    <property type="evidence" value="ECO:0007669"/>
    <property type="project" value="UniProtKB-KW"/>
</dbReference>
<dbReference type="GO" id="GO:0006412">
    <property type="term" value="P:translation"/>
    <property type="evidence" value="ECO:0007669"/>
    <property type="project" value="UniProtKB-UniRule"/>
</dbReference>
<dbReference type="CDD" id="cd01433">
    <property type="entry name" value="Ribosomal_L16_L10e"/>
    <property type="match status" value="1"/>
</dbReference>
<dbReference type="FunFam" id="3.90.1170.10:FF:000001">
    <property type="entry name" value="50S ribosomal protein L16"/>
    <property type="match status" value="1"/>
</dbReference>
<dbReference type="Gene3D" id="3.90.1170.10">
    <property type="entry name" value="Ribosomal protein L10e/L16"/>
    <property type="match status" value="1"/>
</dbReference>
<dbReference type="HAMAP" id="MF_01342">
    <property type="entry name" value="Ribosomal_uL16"/>
    <property type="match status" value="1"/>
</dbReference>
<dbReference type="InterPro" id="IPR047873">
    <property type="entry name" value="Ribosomal_uL16"/>
</dbReference>
<dbReference type="InterPro" id="IPR000114">
    <property type="entry name" value="Ribosomal_uL16_bact-type"/>
</dbReference>
<dbReference type="InterPro" id="IPR020798">
    <property type="entry name" value="Ribosomal_uL16_CS"/>
</dbReference>
<dbReference type="InterPro" id="IPR016180">
    <property type="entry name" value="Ribosomal_uL16_dom"/>
</dbReference>
<dbReference type="InterPro" id="IPR036920">
    <property type="entry name" value="Ribosomal_uL16_sf"/>
</dbReference>
<dbReference type="NCBIfam" id="TIGR01164">
    <property type="entry name" value="rplP_bact"/>
    <property type="match status" value="1"/>
</dbReference>
<dbReference type="PANTHER" id="PTHR12220">
    <property type="entry name" value="50S/60S RIBOSOMAL PROTEIN L16"/>
    <property type="match status" value="1"/>
</dbReference>
<dbReference type="PANTHER" id="PTHR12220:SF13">
    <property type="entry name" value="LARGE RIBOSOMAL SUBUNIT PROTEIN UL16M"/>
    <property type="match status" value="1"/>
</dbReference>
<dbReference type="Pfam" id="PF00252">
    <property type="entry name" value="Ribosomal_L16"/>
    <property type="match status" value="1"/>
</dbReference>
<dbReference type="PRINTS" id="PR00060">
    <property type="entry name" value="RIBOSOMALL16"/>
</dbReference>
<dbReference type="SUPFAM" id="SSF54686">
    <property type="entry name" value="Ribosomal protein L16p/L10e"/>
    <property type="match status" value="1"/>
</dbReference>
<dbReference type="PROSITE" id="PS00586">
    <property type="entry name" value="RIBOSOMAL_L16_1"/>
    <property type="match status" value="1"/>
</dbReference>
<reference key="1">
    <citation type="journal article" date="2004" name="Nat. Biotechnol.">
        <title>The genome sequence of the anaerobic, sulfate-reducing bacterium Desulfovibrio vulgaris Hildenborough.</title>
        <authorList>
            <person name="Heidelberg J.F."/>
            <person name="Seshadri R."/>
            <person name="Haveman S.A."/>
            <person name="Hemme C.L."/>
            <person name="Paulsen I.T."/>
            <person name="Kolonay J.F."/>
            <person name="Eisen J.A."/>
            <person name="Ward N.L."/>
            <person name="Methe B.A."/>
            <person name="Brinkac L.M."/>
            <person name="Daugherty S.C."/>
            <person name="DeBoy R.T."/>
            <person name="Dodson R.J."/>
            <person name="Durkin A.S."/>
            <person name="Madupu R."/>
            <person name="Nelson W.C."/>
            <person name="Sullivan S.A."/>
            <person name="Fouts D.E."/>
            <person name="Haft D.H."/>
            <person name="Selengut J."/>
            <person name="Peterson J.D."/>
            <person name="Davidsen T.M."/>
            <person name="Zafar N."/>
            <person name="Zhou L."/>
            <person name="Radune D."/>
            <person name="Dimitrov G."/>
            <person name="Hance M."/>
            <person name="Tran K."/>
            <person name="Khouri H.M."/>
            <person name="Gill J."/>
            <person name="Utterback T.R."/>
            <person name="Feldblyum T.V."/>
            <person name="Wall J.D."/>
            <person name="Voordouw G."/>
            <person name="Fraser C.M."/>
        </authorList>
    </citation>
    <scope>NUCLEOTIDE SEQUENCE [LARGE SCALE GENOMIC DNA]</scope>
    <source>
        <strain>ATCC 29579 / DSM 644 / CCUG 34227 / NCIMB 8303 / VKM B-1760 / Hildenborough</strain>
    </source>
</reference>
<feature type="chain" id="PRO_0000062095" description="Large ribosomal subunit protein uL16">
    <location>
        <begin position="1"/>
        <end position="137"/>
    </location>
</feature>
<protein>
    <recommendedName>
        <fullName evidence="1">Large ribosomal subunit protein uL16</fullName>
    </recommendedName>
    <alternativeName>
        <fullName evidence="2">50S ribosomal protein L16</fullName>
    </alternativeName>
</protein>
<name>RL16_NITV2</name>